<accession>B0JY39</accession>
<reference key="1">
    <citation type="journal article" date="2007" name="DNA Res.">
        <title>Complete genomic structure of the bloom-forming toxic cyanobacterium Microcystis aeruginosa NIES-843.</title>
        <authorList>
            <person name="Kaneko T."/>
            <person name="Nakajima N."/>
            <person name="Okamoto S."/>
            <person name="Suzuki I."/>
            <person name="Tanabe Y."/>
            <person name="Tamaoki M."/>
            <person name="Nakamura Y."/>
            <person name="Kasai F."/>
            <person name="Watanabe A."/>
            <person name="Kawashima K."/>
            <person name="Kishida Y."/>
            <person name="Ono A."/>
            <person name="Shimizu Y."/>
            <person name="Takahashi C."/>
            <person name="Minami C."/>
            <person name="Fujishiro T."/>
            <person name="Kohara M."/>
            <person name="Katoh M."/>
            <person name="Nakazaki N."/>
            <person name="Nakayama S."/>
            <person name="Yamada M."/>
            <person name="Tabata S."/>
            <person name="Watanabe M.M."/>
        </authorList>
    </citation>
    <scope>NUCLEOTIDE SEQUENCE [LARGE SCALE GENOMIC DNA]</scope>
    <source>
        <strain>NIES-843 / IAM M-247</strain>
    </source>
</reference>
<protein>
    <recommendedName>
        <fullName evidence="1">Small ribosomal subunit protein uS11</fullName>
    </recommendedName>
    <alternativeName>
        <fullName evidence="2">30S ribosomal protein S11</fullName>
    </alternativeName>
</protein>
<gene>
    <name evidence="1" type="primary">rpsK</name>
    <name evidence="1" type="synonym">rps11</name>
    <name type="ordered locus">MAE_52550</name>
</gene>
<proteinExistence type="inferred from homology"/>
<feature type="chain" id="PRO_1000086196" description="Small ribosomal subunit protein uS11">
    <location>
        <begin position="1"/>
        <end position="130"/>
    </location>
</feature>
<organism>
    <name type="scientific">Microcystis aeruginosa (strain NIES-843 / IAM M-2473)</name>
    <dbReference type="NCBI Taxonomy" id="449447"/>
    <lineage>
        <taxon>Bacteria</taxon>
        <taxon>Bacillati</taxon>
        <taxon>Cyanobacteriota</taxon>
        <taxon>Cyanophyceae</taxon>
        <taxon>Oscillatoriophycideae</taxon>
        <taxon>Chroococcales</taxon>
        <taxon>Microcystaceae</taxon>
        <taxon>Microcystis</taxon>
    </lineage>
</organism>
<keyword id="KW-0687">Ribonucleoprotein</keyword>
<keyword id="KW-0689">Ribosomal protein</keyword>
<keyword id="KW-0694">RNA-binding</keyword>
<keyword id="KW-0699">rRNA-binding</keyword>
<evidence type="ECO:0000255" key="1">
    <source>
        <dbReference type="HAMAP-Rule" id="MF_01310"/>
    </source>
</evidence>
<evidence type="ECO:0000305" key="2"/>
<sequence length="130" mass="13756">MARPTKKTGPKKQKKNIPTGVAHIQSTFNNTIVTIADTKGDVISWASAGSSGFKGAKKGTPFAAQTAADNAARRAIEQGMRQLEVMVSGPGAGRETAIRALQGAGLEITLIRDVTPIPHNGCRPPKRRRV</sequence>
<dbReference type="EMBL" id="AP009552">
    <property type="protein sequence ID" value="BAG05077.1"/>
    <property type="molecule type" value="Genomic_DNA"/>
</dbReference>
<dbReference type="RefSeq" id="WP_002735413.1">
    <property type="nucleotide sequence ID" value="NC_010296.1"/>
</dbReference>
<dbReference type="SMR" id="B0JY39"/>
<dbReference type="STRING" id="449447.MAE_52550"/>
<dbReference type="PaxDb" id="449447-MAE_52550"/>
<dbReference type="EnsemblBacteria" id="BAG05077">
    <property type="protein sequence ID" value="BAG05077"/>
    <property type="gene ID" value="MAE_52550"/>
</dbReference>
<dbReference type="GeneID" id="66705716"/>
<dbReference type="KEGG" id="mar:MAE_52550"/>
<dbReference type="eggNOG" id="COG0100">
    <property type="taxonomic scope" value="Bacteria"/>
</dbReference>
<dbReference type="HOGENOM" id="CLU_072439_5_0_3"/>
<dbReference type="BioCyc" id="MAER449447:MAE_RS22845-MONOMER"/>
<dbReference type="Proteomes" id="UP000001510">
    <property type="component" value="Chromosome"/>
</dbReference>
<dbReference type="GO" id="GO:1990904">
    <property type="term" value="C:ribonucleoprotein complex"/>
    <property type="evidence" value="ECO:0007669"/>
    <property type="project" value="UniProtKB-KW"/>
</dbReference>
<dbReference type="GO" id="GO:0005840">
    <property type="term" value="C:ribosome"/>
    <property type="evidence" value="ECO:0007669"/>
    <property type="project" value="UniProtKB-KW"/>
</dbReference>
<dbReference type="GO" id="GO:0019843">
    <property type="term" value="F:rRNA binding"/>
    <property type="evidence" value="ECO:0007669"/>
    <property type="project" value="UniProtKB-UniRule"/>
</dbReference>
<dbReference type="GO" id="GO:0003735">
    <property type="term" value="F:structural constituent of ribosome"/>
    <property type="evidence" value="ECO:0007669"/>
    <property type="project" value="InterPro"/>
</dbReference>
<dbReference type="GO" id="GO:0006412">
    <property type="term" value="P:translation"/>
    <property type="evidence" value="ECO:0007669"/>
    <property type="project" value="UniProtKB-UniRule"/>
</dbReference>
<dbReference type="FunFam" id="3.30.420.80:FF:000001">
    <property type="entry name" value="30S ribosomal protein S11"/>
    <property type="match status" value="1"/>
</dbReference>
<dbReference type="Gene3D" id="3.30.420.80">
    <property type="entry name" value="Ribosomal protein S11"/>
    <property type="match status" value="1"/>
</dbReference>
<dbReference type="HAMAP" id="MF_01310">
    <property type="entry name" value="Ribosomal_uS11"/>
    <property type="match status" value="1"/>
</dbReference>
<dbReference type="InterPro" id="IPR001971">
    <property type="entry name" value="Ribosomal_uS11"/>
</dbReference>
<dbReference type="InterPro" id="IPR019981">
    <property type="entry name" value="Ribosomal_uS11_bac-type"/>
</dbReference>
<dbReference type="InterPro" id="IPR018102">
    <property type="entry name" value="Ribosomal_uS11_CS"/>
</dbReference>
<dbReference type="InterPro" id="IPR036967">
    <property type="entry name" value="Ribosomal_uS11_sf"/>
</dbReference>
<dbReference type="NCBIfam" id="NF003698">
    <property type="entry name" value="PRK05309.1"/>
    <property type="match status" value="1"/>
</dbReference>
<dbReference type="NCBIfam" id="TIGR03632">
    <property type="entry name" value="uS11_bact"/>
    <property type="match status" value="1"/>
</dbReference>
<dbReference type="PANTHER" id="PTHR11759">
    <property type="entry name" value="40S RIBOSOMAL PROTEIN S14/30S RIBOSOMAL PROTEIN S11"/>
    <property type="match status" value="1"/>
</dbReference>
<dbReference type="Pfam" id="PF00411">
    <property type="entry name" value="Ribosomal_S11"/>
    <property type="match status" value="1"/>
</dbReference>
<dbReference type="PIRSF" id="PIRSF002131">
    <property type="entry name" value="Ribosomal_S11"/>
    <property type="match status" value="1"/>
</dbReference>
<dbReference type="SUPFAM" id="SSF53137">
    <property type="entry name" value="Translational machinery components"/>
    <property type="match status" value="1"/>
</dbReference>
<dbReference type="PROSITE" id="PS00054">
    <property type="entry name" value="RIBOSOMAL_S11"/>
    <property type="match status" value="1"/>
</dbReference>
<name>RS11_MICAN</name>
<comment type="function">
    <text evidence="1">Located on the platform of the 30S subunit, it bridges several disparate RNA helices of the 16S rRNA. Forms part of the Shine-Dalgarno cleft in the 70S ribosome.</text>
</comment>
<comment type="subunit">
    <text evidence="1">Part of the 30S ribosomal subunit. Interacts with proteins S7 and S18. Binds to IF-3.</text>
</comment>
<comment type="similarity">
    <text evidence="1">Belongs to the universal ribosomal protein uS11 family.</text>
</comment>